<keyword id="KW-0328">Glycosyltransferase</keyword>
<keyword id="KW-0614">Plasmid</keyword>
<keyword id="KW-1185">Reference proteome</keyword>
<keyword id="KW-0808">Transferase</keyword>
<evidence type="ECO:0000250" key="1">
    <source>
        <dbReference type="UniProtKB" id="P31677"/>
    </source>
</evidence>
<protein>
    <recommendedName>
        <fullName evidence="1">Trehalose-6-phosphate synthase</fullName>
        <shortName evidence="1">TPS</shortName>
        <ecNumber evidence="1">2.4.1.15</ecNumber>
    </recommendedName>
    <alternativeName>
        <fullName evidence="1">Alpha,alpha-trehalose-phosphate synthase [UDP-forming]</fullName>
    </alternativeName>
    <alternativeName>
        <fullName evidence="1">Osmoregulatory trehalose synthesis protein A</fullName>
        <shortName evidence="1">OtsA</shortName>
    </alternativeName>
    <alternativeName>
        <fullName evidence="1">UDP-glucose-glucosephosphate glucosyltransferase</fullName>
    </alternativeName>
</protein>
<reference key="1">
    <citation type="journal article" date="1997" name="Nature">
        <title>Molecular basis of symbiosis between Rhizobium and legumes.</title>
        <authorList>
            <person name="Freiberg C.A."/>
            <person name="Fellay R."/>
            <person name="Bairoch A."/>
            <person name="Broughton W.J."/>
            <person name="Rosenthal A."/>
            <person name="Perret X."/>
        </authorList>
    </citation>
    <scope>NUCLEOTIDE SEQUENCE [LARGE SCALE GENOMIC DNA]</scope>
    <source>
        <strain>NBRC 101917 / NGR234</strain>
    </source>
</reference>
<reference key="2">
    <citation type="journal article" date="2009" name="Appl. Environ. Microbiol.">
        <title>Rhizobium sp. strain NGR234 possesses a remarkable number of secretion systems.</title>
        <authorList>
            <person name="Schmeisser C."/>
            <person name="Liesegang H."/>
            <person name="Krysciak D."/>
            <person name="Bakkou N."/>
            <person name="Le Quere A."/>
            <person name="Wollherr A."/>
            <person name="Heinemeyer I."/>
            <person name="Morgenstern B."/>
            <person name="Pommerening-Roeser A."/>
            <person name="Flores M."/>
            <person name="Palacios R."/>
            <person name="Brenner S."/>
            <person name="Gottschalk G."/>
            <person name="Schmitz R.A."/>
            <person name="Broughton W.J."/>
            <person name="Perret X."/>
            <person name="Strittmatter A.W."/>
            <person name="Streit W.R."/>
        </authorList>
    </citation>
    <scope>NUCLEOTIDE SEQUENCE [LARGE SCALE GENOMIC DNA]</scope>
    <source>
        <strain>NBRC 101917 / NGR234</strain>
    </source>
</reference>
<gene>
    <name evidence="1" type="primary">otsA</name>
    <name type="ordered locus">NGR_a02090</name>
    <name type="ORF">y4pC</name>
</gene>
<accession>P55612</accession>
<dbReference type="EC" id="2.4.1.15" evidence="1"/>
<dbReference type="EMBL" id="U00090">
    <property type="protein sequence ID" value="AAB91813.1"/>
    <property type="molecule type" value="Genomic_DNA"/>
</dbReference>
<dbReference type="RefSeq" id="NP_444016.1">
    <property type="nucleotide sequence ID" value="NC_000914.2"/>
</dbReference>
<dbReference type="RefSeq" id="WP_010875236.1">
    <property type="nucleotide sequence ID" value="NC_000914.2"/>
</dbReference>
<dbReference type="SMR" id="P55612"/>
<dbReference type="CAZy" id="GT20">
    <property type="family name" value="Glycosyltransferase Family 20"/>
</dbReference>
<dbReference type="KEGG" id="rhi:NGR_a02090"/>
<dbReference type="PATRIC" id="fig|394.7.peg.220"/>
<dbReference type="eggNOG" id="COG0380">
    <property type="taxonomic scope" value="Bacteria"/>
</dbReference>
<dbReference type="HOGENOM" id="CLU_002351_7_1_5"/>
<dbReference type="OrthoDB" id="9815690at2"/>
<dbReference type="UniPathway" id="UPA00299"/>
<dbReference type="Proteomes" id="UP000001054">
    <property type="component" value="Plasmid pNGR234a"/>
</dbReference>
<dbReference type="GO" id="GO:0003825">
    <property type="term" value="F:alpha,alpha-trehalose-phosphate synthase (UDP-forming) activity"/>
    <property type="evidence" value="ECO:0007669"/>
    <property type="project" value="UniProtKB-EC"/>
</dbReference>
<dbReference type="GO" id="GO:0005992">
    <property type="term" value="P:trehalose biosynthetic process"/>
    <property type="evidence" value="ECO:0007669"/>
    <property type="project" value="UniProtKB-UniPathway"/>
</dbReference>
<dbReference type="CDD" id="cd03788">
    <property type="entry name" value="GT20_TPS"/>
    <property type="match status" value="1"/>
</dbReference>
<dbReference type="Gene3D" id="3.40.50.2000">
    <property type="entry name" value="Glycogen Phosphorylase B"/>
    <property type="match status" value="2"/>
</dbReference>
<dbReference type="InterPro" id="IPR001830">
    <property type="entry name" value="Glyco_trans_20"/>
</dbReference>
<dbReference type="InterPro" id="IPR012766">
    <property type="entry name" value="Trehalose_OtsA"/>
</dbReference>
<dbReference type="NCBIfam" id="TIGR02400">
    <property type="entry name" value="trehalose_OtsA"/>
    <property type="match status" value="1"/>
</dbReference>
<dbReference type="PANTHER" id="PTHR10788:SF106">
    <property type="entry name" value="BCDNA.GH08860"/>
    <property type="match status" value="1"/>
</dbReference>
<dbReference type="PANTHER" id="PTHR10788">
    <property type="entry name" value="TREHALOSE-6-PHOSPHATE SYNTHASE"/>
    <property type="match status" value="1"/>
</dbReference>
<dbReference type="Pfam" id="PF00982">
    <property type="entry name" value="Glyco_transf_20"/>
    <property type="match status" value="1"/>
</dbReference>
<dbReference type="SUPFAM" id="SSF53756">
    <property type="entry name" value="UDP-Glycosyltransferase/glycogen phosphorylase"/>
    <property type="match status" value="1"/>
</dbReference>
<proteinExistence type="inferred from homology"/>
<sequence>MSRLVIVSNRVPVPDKGGIAPAGGLAVALKVALEEQGGGIWMGWSGKSSGEDEPAPLAQLQQGNITYALTDLTDTDVEEYYHGFANRVLWPICHYRLDLAEYGRKEMAGYFRVNRFFAHRLAPLVKPDDVIWVHDYPLIPLAAELRQMGLENRIGFFLHIPWPPADVLFTMPVHEEIMRGLSHYDVVGFQTDHDLENFASCLRREGIGDALGGGRLSAYGRIFKGGVYAIGIETAAFAEFAKKASTNSTVKKARESIERRSLIIGVDRLDYSKGLTQRIEAFERFILANPAQRGRVTYLQITPKSRSEVPEYEAMQRTVAEQAGRVNGALGAVDWVPMRYINRSVGRRVLAGLYRLGKVGLVTPLRDGKNLVAKEYVAAQDPDDPGVLVLSRFAGAARELQGALLVNPYDIEGTANAMARSLSMPLEERQERWTTMMDQLLEHDVSRWCRDFLNDLTASSDRCG</sequence>
<geneLocation type="plasmid">
    <name>sym pNGR234a</name>
</geneLocation>
<comment type="function">
    <text evidence="1">Probably involved in the osmoprotection via the biosynthesis of trehalose. Catalyzes the transfer of glucose from UDP-alpha-D-glucose (UDP-Glc) to D-glucose 6-phosphate (Glc-6-P) to form trehalose-6-phosphate. Acts with retention of the anomeric configuration of the UDP-sugar donor.</text>
</comment>
<comment type="catalytic activity">
    <reaction evidence="1">
        <text>D-glucose 6-phosphate + UDP-alpha-D-glucose = alpha,alpha-trehalose 6-phosphate + UDP + H(+)</text>
        <dbReference type="Rhea" id="RHEA:18889"/>
        <dbReference type="ChEBI" id="CHEBI:15378"/>
        <dbReference type="ChEBI" id="CHEBI:58223"/>
        <dbReference type="ChEBI" id="CHEBI:58429"/>
        <dbReference type="ChEBI" id="CHEBI:58885"/>
        <dbReference type="ChEBI" id="CHEBI:61548"/>
        <dbReference type="EC" id="2.4.1.15"/>
    </reaction>
</comment>
<comment type="pathway">
    <text evidence="1">Glycan biosynthesis; trehalose biosynthesis.</text>
</comment>
<comment type="subunit">
    <text evidence="1">Homotetramer.</text>
</comment>
<comment type="similarity">
    <text evidence="1">Belongs to the glycosyltransferase 20 family.</text>
</comment>
<feature type="chain" id="PRO_0000122491" description="Trehalose-6-phosphate synthase">
    <location>
        <begin position="1"/>
        <end position="464"/>
    </location>
</feature>
<feature type="binding site" evidence="1">
    <location>
        <position position="10"/>
    </location>
    <ligand>
        <name>D-glucose 6-phosphate</name>
        <dbReference type="ChEBI" id="CHEBI:61548"/>
    </ligand>
</feature>
<feature type="binding site" evidence="1">
    <location>
        <begin position="23"/>
        <end position="24"/>
    </location>
    <ligand>
        <name>UDP-alpha-D-glucose</name>
        <dbReference type="ChEBI" id="CHEBI:58885"/>
    </ligand>
</feature>
<feature type="binding site" evidence="1">
    <location>
        <position position="81"/>
    </location>
    <ligand>
        <name>D-glucose 6-phosphate</name>
        <dbReference type="ChEBI" id="CHEBI:61548"/>
    </ligand>
</feature>
<feature type="binding site" evidence="1">
    <location>
        <position position="135"/>
    </location>
    <ligand>
        <name>D-glucose 6-phosphate</name>
        <dbReference type="ChEBI" id="CHEBI:61548"/>
    </ligand>
</feature>
<feature type="binding site" evidence="1">
    <location>
        <position position="268"/>
    </location>
    <ligand>
        <name>UDP-alpha-D-glucose</name>
        <dbReference type="ChEBI" id="CHEBI:58885"/>
    </ligand>
</feature>
<feature type="binding site" evidence="1">
    <location>
        <position position="273"/>
    </location>
    <ligand>
        <name>UDP-alpha-D-glucose</name>
        <dbReference type="ChEBI" id="CHEBI:58885"/>
    </ligand>
</feature>
<feature type="binding site" evidence="1">
    <location>
        <position position="306"/>
    </location>
    <ligand>
        <name>D-glucose 6-phosphate</name>
        <dbReference type="ChEBI" id="CHEBI:61548"/>
    </ligand>
</feature>
<feature type="binding site" evidence="1">
    <location>
        <begin position="371"/>
        <end position="375"/>
    </location>
    <ligand>
        <name>UDP-alpha-D-glucose</name>
        <dbReference type="ChEBI" id="CHEBI:58885"/>
    </ligand>
</feature>
<feature type="site" description="Involved in alpha anomer selectivity" evidence="1">
    <location>
        <position position="90"/>
    </location>
</feature>
<feature type="site" description="Involved in alpha anomer selectivity" evidence="1">
    <location>
        <position position="160"/>
    </location>
</feature>
<organism>
    <name type="scientific">Sinorhizobium fredii (strain NBRC 101917 / NGR234)</name>
    <dbReference type="NCBI Taxonomy" id="394"/>
    <lineage>
        <taxon>Bacteria</taxon>
        <taxon>Pseudomonadati</taxon>
        <taxon>Pseudomonadota</taxon>
        <taxon>Alphaproteobacteria</taxon>
        <taxon>Hyphomicrobiales</taxon>
        <taxon>Rhizobiaceae</taxon>
        <taxon>Sinorhizobium/Ensifer group</taxon>
        <taxon>Sinorhizobium</taxon>
    </lineage>
</organism>
<name>OTSA_SINFN</name>